<protein>
    <recommendedName>
        <fullName evidence="1">Adenosine deaminase</fullName>
        <ecNumber evidence="1">3.5.4.4</ecNumber>
    </recommendedName>
    <alternativeName>
        <fullName evidence="1">Adenosine aminohydrolase</fullName>
    </alternativeName>
</protein>
<name>ADD_ERWT9</name>
<evidence type="ECO:0000255" key="1">
    <source>
        <dbReference type="HAMAP-Rule" id="MF_00540"/>
    </source>
</evidence>
<feature type="chain" id="PRO_1000128847" description="Adenosine deaminase">
    <location>
        <begin position="1"/>
        <end position="332"/>
    </location>
</feature>
<feature type="active site" description="Proton donor" evidence="1">
    <location>
        <position position="200"/>
    </location>
</feature>
<feature type="binding site" evidence="1">
    <location>
        <position position="12"/>
    </location>
    <ligand>
        <name>Zn(2+)</name>
        <dbReference type="ChEBI" id="CHEBI:29105"/>
        <note>catalytic</note>
    </ligand>
</feature>
<feature type="binding site" evidence="1">
    <location>
        <position position="14"/>
    </location>
    <ligand>
        <name>substrate</name>
    </ligand>
</feature>
<feature type="binding site" evidence="1">
    <location>
        <position position="14"/>
    </location>
    <ligand>
        <name>Zn(2+)</name>
        <dbReference type="ChEBI" id="CHEBI:29105"/>
        <note>catalytic</note>
    </ligand>
</feature>
<feature type="binding site" evidence="1">
    <location>
        <position position="16"/>
    </location>
    <ligand>
        <name>substrate</name>
    </ligand>
</feature>
<feature type="binding site" evidence="1">
    <location>
        <position position="170"/>
    </location>
    <ligand>
        <name>substrate</name>
    </ligand>
</feature>
<feature type="binding site" evidence="1">
    <location>
        <position position="197"/>
    </location>
    <ligand>
        <name>Zn(2+)</name>
        <dbReference type="ChEBI" id="CHEBI:29105"/>
        <note>catalytic</note>
    </ligand>
</feature>
<feature type="binding site" evidence="1">
    <location>
        <position position="278"/>
    </location>
    <ligand>
        <name>Zn(2+)</name>
        <dbReference type="ChEBI" id="CHEBI:29105"/>
        <note>catalytic</note>
    </ligand>
</feature>
<feature type="binding site" evidence="1">
    <location>
        <position position="279"/>
    </location>
    <ligand>
        <name>substrate</name>
    </ligand>
</feature>
<feature type="site" description="Important for catalytic activity" evidence="1">
    <location>
        <position position="221"/>
    </location>
</feature>
<reference key="1">
    <citation type="journal article" date="2008" name="Environ. Microbiol.">
        <title>The genome of Erwinia tasmaniensis strain Et1/99, a non-pathogenic bacterium in the genus Erwinia.</title>
        <authorList>
            <person name="Kube M."/>
            <person name="Migdoll A.M."/>
            <person name="Mueller I."/>
            <person name="Kuhl H."/>
            <person name="Beck A."/>
            <person name="Reinhardt R."/>
            <person name="Geider K."/>
        </authorList>
    </citation>
    <scope>NUCLEOTIDE SEQUENCE [LARGE SCALE GENOMIC DNA]</scope>
    <source>
        <strain>DSM 17950 / CFBP 7177 / CIP 109463 / NCPPB 4357 / Et1/99</strain>
    </source>
</reference>
<accession>B2VK11</accession>
<gene>
    <name evidence="1" type="primary">add</name>
    <name type="ordered locus">ETA_17650</name>
</gene>
<comment type="function">
    <text evidence="1">Catalyzes the hydrolytic deamination of adenosine and 2-deoxyadenosine.</text>
</comment>
<comment type="catalytic activity">
    <reaction evidence="1">
        <text>adenosine + H2O + H(+) = inosine + NH4(+)</text>
        <dbReference type="Rhea" id="RHEA:24408"/>
        <dbReference type="ChEBI" id="CHEBI:15377"/>
        <dbReference type="ChEBI" id="CHEBI:15378"/>
        <dbReference type="ChEBI" id="CHEBI:16335"/>
        <dbReference type="ChEBI" id="CHEBI:17596"/>
        <dbReference type="ChEBI" id="CHEBI:28938"/>
        <dbReference type="EC" id="3.5.4.4"/>
    </reaction>
    <physiologicalReaction direction="left-to-right" evidence="1">
        <dbReference type="Rhea" id="RHEA:24409"/>
    </physiologicalReaction>
</comment>
<comment type="catalytic activity">
    <reaction evidence="1">
        <text>2'-deoxyadenosine + H2O + H(+) = 2'-deoxyinosine + NH4(+)</text>
        <dbReference type="Rhea" id="RHEA:28190"/>
        <dbReference type="ChEBI" id="CHEBI:15377"/>
        <dbReference type="ChEBI" id="CHEBI:15378"/>
        <dbReference type="ChEBI" id="CHEBI:17256"/>
        <dbReference type="ChEBI" id="CHEBI:28938"/>
        <dbReference type="ChEBI" id="CHEBI:28997"/>
        <dbReference type="EC" id="3.5.4.4"/>
    </reaction>
    <physiologicalReaction direction="left-to-right" evidence="1">
        <dbReference type="Rhea" id="RHEA:28191"/>
    </physiologicalReaction>
</comment>
<comment type="cofactor">
    <cofactor evidence="1">
        <name>Zn(2+)</name>
        <dbReference type="ChEBI" id="CHEBI:29105"/>
    </cofactor>
    <text evidence="1">Binds 1 zinc ion per subunit.</text>
</comment>
<comment type="similarity">
    <text evidence="1">Belongs to the metallo-dependent hydrolases superfamily. Adenosine and AMP deaminases family. Adenosine deaminase subfamily.</text>
</comment>
<sequence>MIDSQLPLTDIHRHLDGNIRAQTILDLGREFNLTLPATTLAALRPHVQVIEAEPDLVSFLNKLDWGVKVLGSLDACRRVALENVEDAARAGIHYAELRFSPGYMAMTHGLPVAGVVEAVIDGIRAGCAAHNIDVRLIGIMSRTFGEDACLRELDGLLAHRDGITALDLAGDELGFPGRRFLSHFNRARDAGLRITVHAGEAAGAESIWQAIRELGAERIGHGVKAVEDPALMDFLAQEGIGIESCLTSNIQTSTVATLADHPLKTFLNHGILATINTDDPAVQGIEIEHEYHVAAPAAGLSVQQMRVAQENGLKIAFLSEEEKAAVRARLAA</sequence>
<keyword id="KW-0378">Hydrolase</keyword>
<keyword id="KW-0479">Metal-binding</keyword>
<keyword id="KW-0546">Nucleotide metabolism</keyword>
<keyword id="KW-1185">Reference proteome</keyword>
<keyword id="KW-0862">Zinc</keyword>
<proteinExistence type="inferred from homology"/>
<organism>
    <name type="scientific">Erwinia tasmaniensis (strain DSM 17950 / CFBP 7177 / CIP 109463 / NCPPB 4357 / Et1/99)</name>
    <dbReference type="NCBI Taxonomy" id="465817"/>
    <lineage>
        <taxon>Bacteria</taxon>
        <taxon>Pseudomonadati</taxon>
        <taxon>Pseudomonadota</taxon>
        <taxon>Gammaproteobacteria</taxon>
        <taxon>Enterobacterales</taxon>
        <taxon>Erwiniaceae</taxon>
        <taxon>Erwinia</taxon>
    </lineage>
</organism>
<dbReference type="EC" id="3.5.4.4" evidence="1"/>
<dbReference type="EMBL" id="CU468135">
    <property type="protein sequence ID" value="CAO96811.1"/>
    <property type="molecule type" value="Genomic_DNA"/>
</dbReference>
<dbReference type="RefSeq" id="WP_012441500.1">
    <property type="nucleotide sequence ID" value="NC_010694.1"/>
</dbReference>
<dbReference type="SMR" id="B2VK11"/>
<dbReference type="STRING" id="465817.ETA_17650"/>
<dbReference type="KEGG" id="eta:ETA_17650"/>
<dbReference type="eggNOG" id="COG1816">
    <property type="taxonomic scope" value="Bacteria"/>
</dbReference>
<dbReference type="HOGENOM" id="CLU_039228_0_2_6"/>
<dbReference type="OrthoDB" id="105475at2"/>
<dbReference type="Proteomes" id="UP000001726">
    <property type="component" value="Chromosome"/>
</dbReference>
<dbReference type="GO" id="GO:0005829">
    <property type="term" value="C:cytosol"/>
    <property type="evidence" value="ECO:0007669"/>
    <property type="project" value="TreeGrafter"/>
</dbReference>
<dbReference type="GO" id="GO:0046936">
    <property type="term" value="F:2'-deoxyadenosine deaminase activity"/>
    <property type="evidence" value="ECO:0007669"/>
    <property type="project" value="RHEA"/>
</dbReference>
<dbReference type="GO" id="GO:0004000">
    <property type="term" value="F:adenosine deaminase activity"/>
    <property type="evidence" value="ECO:0007669"/>
    <property type="project" value="UniProtKB-UniRule"/>
</dbReference>
<dbReference type="GO" id="GO:0008270">
    <property type="term" value="F:zinc ion binding"/>
    <property type="evidence" value="ECO:0007669"/>
    <property type="project" value="UniProtKB-UniRule"/>
</dbReference>
<dbReference type="GO" id="GO:0006154">
    <property type="term" value="P:adenosine catabolic process"/>
    <property type="evidence" value="ECO:0007669"/>
    <property type="project" value="TreeGrafter"/>
</dbReference>
<dbReference type="GO" id="GO:0043103">
    <property type="term" value="P:hypoxanthine salvage"/>
    <property type="evidence" value="ECO:0007669"/>
    <property type="project" value="TreeGrafter"/>
</dbReference>
<dbReference type="GO" id="GO:0046103">
    <property type="term" value="P:inosine biosynthetic process"/>
    <property type="evidence" value="ECO:0007669"/>
    <property type="project" value="TreeGrafter"/>
</dbReference>
<dbReference type="GO" id="GO:0009117">
    <property type="term" value="P:nucleotide metabolic process"/>
    <property type="evidence" value="ECO:0007669"/>
    <property type="project" value="UniProtKB-KW"/>
</dbReference>
<dbReference type="GO" id="GO:0009168">
    <property type="term" value="P:purine ribonucleoside monophosphate biosynthetic process"/>
    <property type="evidence" value="ECO:0007669"/>
    <property type="project" value="UniProtKB-UniRule"/>
</dbReference>
<dbReference type="CDD" id="cd01320">
    <property type="entry name" value="ADA"/>
    <property type="match status" value="1"/>
</dbReference>
<dbReference type="FunFam" id="3.20.20.140:FF:000009">
    <property type="entry name" value="Adenosine deaminase"/>
    <property type="match status" value="1"/>
</dbReference>
<dbReference type="Gene3D" id="3.20.20.140">
    <property type="entry name" value="Metal-dependent hydrolases"/>
    <property type="match status" value="1"/>
</dbReference>
<dbReference type="HAMAP" id="MF_00540">
    <property type="entry name" value="A_deaminase"/>
    <property type="match status" value="1"/>
</dbReference>
<dbReference type="InterPro" id="IPR028893">
    <property type="entry name" value="A_deaminase"/>
</dbReference>
<dbReference type="InterPro" id="IPR001365">
    <property type="entry name" value="A_deaminase_dom"/>
</dbReference>
<dbReference type="InterPro" id="IPR006330">
    <property type="entry name" value="Ado/ade_deaminase"/>
</dbReference>
<dbReference type="InterPro" id="IPR032466">
    <property type="entry name" value="Metal_Hydrolase"/>
</dbReference>
<dbReference type="NCBIfam" id="TIGR01430">
    <property type="entry name" value="aden_deam"/>
    <property type="match status" value="1"/>
</dbReference>
<dbReference type="NCBIfam" id="NF006846">
    <property type="entry name" value="PRK09358.1-1"/>
    <property type="match status" value="1"/>
</dbReference>
<dbReference type="PANTHER" id="PTHR11409">
    <property type="entry name" value="ADENOSINE DEAMINASE"/>
    <property type="match status" value="1"/>
</dbReference>
<dbReference type="PANTHER" id="PTHR11409:SF43">
    <property type="entry name" value="ADENOSINE DEAMINASE"/>
    <property type="match status" value="1"/>
</dbReference>
<dbReference type="Pfam" id="PF00962">
    <property type="entry name" value="A_deaminase"/>
    <property type="match status" value="1"/>
</dbReference>
<dbReference type="SUPFAM" id="SSF51556">
    <property type="entry name" value="Metallo-dependent hydrolases"/>
    <property type="match status" value="1"/>
</dbReference>